<protein>
    <recommendedName>
        <fullName evidence="1">UPF0178 protein BMEA_A2036</fullName>
    </recommendedName>
</protein>
<comment type="similarity">
    <text evidence="1">Belongs to the UPF0178 family.</text>
</comment>
<dbReference type="EMBL" id="CP001488">
    <property type="protein sequence ID" value="ACO01694.1"/>
    <property type="molecule type" value="Genomic_DNA"/>
</dbReference>
<dbReference type="RefSeq" id="WP_002965045.1">
    <property type="nucleotide sequence ID" value="NC_012441.1"/>
</dbReference>
<dbReference type="KEGG" id="bmi:BMEA_A2036"/>
<dbReference type="HOGENOM" id="CLU_106619_2_1_5"/>
<dbReference type="Proteomes" id="UP000001748">
    <property type="component" value="Chromosome I"/>
</dbReference>
<dbReference type="HAMAP" id="MF_00489">
    <property type="entry name" value="UPF0178"/>
    <property type="match status" value="1"/>
</dbReference>
<dbReference type="InterPro" id="IPR003791">
    <property type="entry name" value="UPF0178"/>
</dbReference>
<dbReference type="NCBIfam" id="NF001095">
    <property type="entry name" value="PRK00124.1"/>
    <property type="match status" value="1"/>
</dbReference>
<dbReference type="PANTHER" id="PTHR35146">
    <property type="entry name" value="UPF0178 PROTEIN YAII"/>
    <property type="match status" value="1"/>
</dbReference>
<dbReference type="PANTHER" id="PTHR35146:SF1">
    <property type="entry name" value="UPF0178 PROTEIN YAII"/>
    <property type="match status" value="1"/>
</dbReference>
<dbReference type="Pfam" id="PF02639">
    <property type="entry name" value="DUF188"/>
    <property type="match status" value="1"/>
</dbReference>
<reference key="1">
    <citation type="submission" date="2009-03" db="EMBL/GenBank/DDBJ databases">
        <title>Brucella melitensis ATCC 23457 whole genome shotgun sequencing project.</title>
        <authorList>
            <person name="Setubal J.C."/>
            <person name="Boyle S."/>
            <person name="Crasta O.R."/>
            <person name="Gillespie J.J."/>
            <person name="Kenyon R.W."/>
            <person name="Lu J."/>
            <person name="Mane S."/>
            <person name="Nagrani S."/>
            <person name="Shallom J.M."/>
            <person name="Shallom S."/>
            <person name="Shukla M."/>
            <person name="Snyder E.E."/>
            <person name="Sobral B.W."/>
            <person name="Wattam A.R."/>
            <person name="Will R."/>
            <person name="Williams K."/>
            <person name="Yoo H."/>
            <person name="Munk C."/>
            <person name="Tapia R."/>
            <person name="Han C."/>
            <person name="Detter J.C."/>
            <person name="Bruce D."/>
            <person name="Brettin T.S."/>
        </authorList>
    </citation>
    <scope>NUCLEOTIDE SEQUENCE [LARGE SCALE GENOMIC DNA]</scope>
    <source>
        <strain>ATCC 23457</strain>
    </source>
</reference>
<evidence type="ECO:0000255" key="1">
    <source>
        <dbReference type="HAMAP-Rule" id="MF_00489"/>
    </source>
</evidence>
<sequence>MENEPDTICILVDADACPVKAEIYRVAERHNLPVVIVANSFIAIPREAQRVERVVVSGNLDAADDWIAEHSRPGAVVVTADIPLASHALEKGASVIAPNGRIHTQSTIGNTLATRNLMDSLRSAGEVTGGPAPFAPKDRSAFLSALDLAIVRLKRAGFHAS</sequence>
<proteinExistence type="inferred from homology"/>
<gene>
    <name type="ordered locus">BMEA_A2036</name>
</gene>
<accession>C0RFM2</accession>
<organism>
    <name type="scientific">Brucella melitensis biotype 2 (strain ATCC 23457)</name>
    <dbReference type="NCBI Taxonomy" id="546272"/>
    <lineage>
        <taxon>Bacteria</taxon>
        <taxon>Pseudomonadati</taxon>
        <taxon>Pseudomonadota</taxon>
        <taxon>Alphaproteobacteria</taxon>
        <taxon>Hyphomicrobiales</taxon>
        <taxon>Brucellaceae</taxon>
        <taxon>Brucella/Ochrobactrum group</taxon>
        <taxon>Brucella</taxon>
    </lineage>
</organism>
<feature type="chain" id="PRO_1000197826" description="UPF0178 protein BMEA_A2036">
    <location>
        <begin position="1"/>
        <end position="161"/>
    </location>
</feature>
<name>Y2036_BRUMB</name>